<comment type="subcellular location">
    <subcellularLocation>
        <location evidence="2">Cell membrane</location>
        <topology evidence="2">Multi-pass membrane protein</topology>
    </subcellularLocation>
</comment>
<comment type="similarity">
    <text evidence="2">Belongs to the UPF0382 family.</text>
</comment>
<organism>
    <name type="scientific">Staphylococcus aureus (strain bovine RF122 / ET3-1)</name>
    <dbReference type="NCBI Taxonomy" id="273036"/>
    <lineage>
        <taxon>Bacteria</taxon>
        <taxon>Bacillati</taxon>
        <taxon>Bacillota</taxon>
        <taxon>Bacilli</taxon>
        <taxon>Bacillales</taxon>
        <taxon>Staphylococcaceae</taxon>
        <taxon>Staphylococcus</taxon>
    </lineage>
</organism>
<reference key="1">
    <citation type="journal article" date="2007" name="PLoS ONE">
        <title>Molecular correlates of host specialization in Staphylococcus aureus.</title>
        <authorList>
            <person name="Herron-Olson L."/>
            <person name="Fitzgerald J.R."/>
            <person name="Musser J.M."/>
            <person name="Kapur V."/>
        </authorList>
    </citation>
    <scope>NUCLEOTIDE SEQUENCE [LARGE SCALE GENOMIC DNA]</scope>
    <source>
        <strain>bovine RF122 / ET3-1</strain>
    </source>
</reference>
<sequence>MKLFIILGALNAMMAVGTGAFGAHGLQGKISDHYLSVWEKATTYQMYHGLALLIIGVISGTTSINVNWAGWLIFAGIIFFSGSLYILVLTQIKVLGTITPIGGVLFIIGWIMLIIATFKFAG</sequence>
<gene>
    <name type="ordered locus">SAB0533</name>
</gene>
<feature type="chain" id="PRO_0000249029" description="UPF0382 membrane protein SAB0533">
    <location>
        <begin position="1"/>
        <end position="122"/>
    </location>
</feature>
<feature type="transmembrane region" description="Helical" evidence="1">
    <location>
        <begin position="3"/>
        <end position="23"/>
    </location>
</feature>
<feature type="transmembrane region" description="Helical" evidence="1">
    <location>
        <begin position="46"/>
        <end position="66"/>
    </location>
</feature>
<feature type="transmembrane region" description="Helical" evidence="1">
    <location>
        <begin position="69"/>
        <end position="89"/>
    </location>
</feature>
<feature type="transmembrane region" description="Helical" evidence="1">
    <location>
        <begin position="98"/>
        <end position="118"/>
    </location>
</feature>
<accession>Q2YS64</accession>
<dbReference type="EMBL" id="AJ938182">
    <property type="protein sequence ID" value="CAI80221.1"/>
    <property type="molecule type" value="Genomic_DNA"/>
</dbReference>
<dbReference type="RefSeq" id="WP_000765184.1">
    <property type="nucleotide sequence ID" value="NC_007622.1"/>
</dbReference>
<dbReference type="KEGG" id="sab:SAB0533"/>
<dbReference type="HOGENOM" id="CLU_096548_3_3_9"/>
<dbReference type="GO" id="GO:0005886">
    <property type="term" value="C:plasma membrane"/>
    <property type="evidence" value="ECO:0007669"/>
    <property type="project" value="UniProtKB-SubCell"/>
</dbReference>
<dbReference type="InterPro" id="IPR006696">
    <property type="entry name" value="DUF423"/>
</dbReference>
<dbReference type="PANTHER" id="PTHR43461">
    <property type="entry name" value="TRANSMEMBRANE PROTEIN 256"/>
    <property type="match status" value="1"/>
</dbReference>
<dbReference type="PANTHER" id="PTHR43461:SF1">
    <property type="entry name" value="TRANSMEMBRANE PROTEIN 256"/>
    <property type="match status" value="1"/>
</dbReference>
<dbReference type="Pfam" id="PF04241">
    <property type="entry name" value="DUF423"/>
    <property type="match status" value="1"/>
</dbReference>
<proteinExistence type="inferred from homology"/>
<evidence type="ECO:0000255" key="1"/>
<evidence type="ECO:0000305" key="2"/>
<keyword id="KW-1003">Cell membrane</keyword>
<keyword id="KW-0472">Membrane</keyword>
<keyword id="KW-0812">Transmembrane</keyword>
<keyword id="KW-1133">Transmembrane helix</keyword>
<name>Y533_STAAB</name>
<protein>
    <recommendedName>
        <fullName>UPF0382 membrane protein SAB0533</fullName>
    </recommendedName>
</protein>